<evidence type="ECO:0000255" key="1">
    <source>
        <dbReference type="HAMAP-Rule" id="MF_00030"/>
    </source>
</evidence>
<evidence type="ECO:0000255" key="2">
    <source>
        <dbReference type="PROSITE-ProRule" id="PRU01175"/>
    </source>
</evidence>
<accession>Q59827</accession>
<name>DGTP_SHIBO</name>
<sequence length="505" mass="59498">MAQIDFRKKINWHRRYRSPQGVKTEHEILRIFESDRGRIINSPAIRRLQQKTQVFPLERNAAVRTRLTHSMEVQQVGRYIAKEILSRMKELKLLEAYGLDELTGPFESIVEMSCLMHDIGNPPFGHFGEAAINDWFRQRLHPEDAESQPLTDDRCRVRGLRLRDGEEPLNELRRKIRQDLCHFEGNAQGIRLVHTLMRMNLTWAQVGGILKYTRPAWWRGETPETHHYLMKKPGYYLSEEAYIARLRKELNLALYSRFPLTWIMEAADDISYCVADLEDAVEKRIYTLEQLYHHLHDAWGQHEKGSLFSLVVENAWEKSRSNSLSRSTEDQFFMYLRVNTLNKLVPYAAQRFIDNLPAIFAGTFNHALLEDASECSDLLKLYKNVAVKHVFSHPDVERLELQGYRVISGLLEIYRPLLSLSLSDFTELVEKERVKRFPIESRLFHKLSTPHRLAYVEAVSKLPSDSPEFPLWEYYYRCRLLQDYISGMTDLYAWDEYRRLMAVEQ</sequence>
<gene>
    <name evidence="1" type="primary">dgt</name>
</gene>
<organism>
    <name type="scientific">Shigella boydii</name>
    <dbReference type="NCBI Taxonomy" id="621"/>
    <lineage>
        <taxon>Bacteria</taxon>
        <taxon>Pseudomonadati</taxon>
        <taxon>Pseudomonadota</taxon>
        <taxon>Gammaproteobacteria</taxon>
        <taxon>Enterobacterales</taxon>
        <taxon>Enterobacteriaceae</taxon>
        <taxon>Shigella</taxon>
    </lineage>
</organism>
<keyword id="KW-0903">Direct protein sequencing</keyword>
<keyword id="KW-0378">Hydrolase</keyword>
<keyword id="KW-0460">Magnesium</keyword>
<comment type="function">
    <text>dGTPase preferentially hydrolyzes dGTP over the other canonical NTPs.</text>
</comment>
<comment type="catalytic activity">
    <reaction evidence="1">
        <text>dGTP + H2O = 2'-deoxyguanosine + triphosphate + H(+)</text>
        <dbReference type="Rhea" id="RHEA:15193"/>
        <dbReference type="ChEBI" id="CHEBI:15377"/>
        <dbReference type="ChEBI" id="CHEBI:15378"/>
        <dbReference type="ChEBI" id="CHEBI:17172"/>
        <dbReference type="ChEBI" id="CHEBI:18036"/>
        <dbReference type="ChEBI" id="CHEBI:61429"/>
        <dbReference type="EC" id="3.1.5.1"/>
    </reaction>
</comment>
<comment type="cofactor">
    <cofactor>
        <name>Mg(2+)</name>
        <dbReference type="ChEBI" id="CHEBI:18420"/>
    </cofactor>
</comment>
<comment type="activity regulation">
    <text>Inhibited by the action of reducing agents such as dithiothreitol and 2-mercaptoethanol.</text>
</comment>
<comment type="biophysicochemical properties">
    <phDependence>
        <text>Optimum pH is 8.2.</text>
    </phDependence>
    <temperatureDependence>
        <text>Thermostable. Fully active at 60 degrees Celsius.</text>
    </temperatureDependence>
</comment>
<comment type="subunit">
    <text>Homotetramer.</text>
</comment>
<comment type="similarity">
    <text evidence="1">Belongs to the dGTPase family. Type 1 subfamily.</text>
</comment>
<proteinExistence type="evidence at protein level"/>
<feature type="initiator methionine" description="Removed">
    <location>
        <position position="1"/>
    </location>
</feature>
<feature type="chain" id="PRO_0000205286" description="Deoxyguanosinetriphosphate triphosphohydrolase">
    <location>
        <begin position="2"/>
        <end position="505"/>
    </location>
</feature>
<feature type="domain" description="HD" evidence="2">
    <location>
        <begin position="66"/>
        <end position="273"/>
    </location>
</feature>
<reference key="1">
    <citation type="journal article" date="1997" name="J. Biol. Chem.">
        <title>Cloning, purification, and characterization of the Shigella boydii dGTP triphosphohydrolase.</title>
        <authorList>
            <person name="Quirk S."/>
            <person name="Do B.T."/>
        </authorList>
    </citation>
    <scope>NUCLEOTIDE SEQUENCE [GENOMIC DNA]</scope>
    <scope>PROTEIN SEQUENCE OF N-TERMINUS</scope>
    <scope>CHARACTERIZATION</scope>
    <source>
        <strain>ATCC 9207 / AMC 43-G-58</strain>
    </source>
</reference>
<protein>
    <recommendedName>
        <fullName evidence="1">Deoxyguanosinetriphosphate triphosphohydrolase</fullName>
        <shortName evidence="1">dGTP triphosphohydrolase</shortName>
        <shortName evidence="1">dGTPase</shortName>
        <ecNumber evidence="1">3.1.5.1</ecNumber>
    </recommendedName>
</protein>
<dbReference type="EC" id="3.1.5.1" evidence="1"/>
<dbReference type="EMBL" id="U42434">
    <property type="protein sequence ID" value="AAA85188.1"/>
    <property type="molecule type" value="Genomic_DNA"/>
</dbReference>
<dbReference type="SMR" id="Q59827"/>
<dbReference type="GO" id="GO:0008832">
    <property type="term" value="F:dGTPase activity"/>
    <property type="evidence" value="ECO:0007669"/>
    <property type="project" value="UniProtKB-UniRule"/>
</dbReference>
<dbReference type="GO" id="GO:0000287">
    <property type="term" value="F:magnesium ion binding"/>
    <property type="evidence" value="ECO:0007669"/>
    <property type="project" value="UniProtKB-UniRule"/>
</dbReference>
<dbReference type="GO" id="GO:0006203">
    <property type="term" value="P:dGTP catabolic process"/>
    <property type="evidence" value="ECO:0007669"/>
    <property type="project" value="InterPro"/>
</dbReference>
<dbReference type="CDD" id="cd00077">
    <property type="entry name" value="HDc"/>
    <property type="match status" value="1"/>
</dbReference>
<dbReference type="FunFam" id="1.10.3210.10:FF:000009">
    <property type="entry name" value="Deoxyguanosinetriphosphate triphosphohydrolase"/>
    <property type="match status" value="1"/>
</dbReference>
<dbReference type="FunFam" id="1.10.3210.10:FF:000010">
    <property type="entry name" value="Deoxyguanosinetriphosphate triphosphohydrolase"/>
    <property type="match status" value="1"/>
</dbReference>
<dbReference type="FunFam" id="1.10.3410.10:FF:000001">
    <property type="entry name" value="Deoxyguanosinetriphosphate triphosphohydrolase"/>
    <property type="match status" value="1"/>
</dbReference>
<dbReference type="Gene3D" id="1.10.3210.10">
    <property type="entry name" value="Hypothetical protein af1432"/>
    <property type="match status" value="2"/>
</dbReference>
<dbReference type="Gene3D" id="1.10.3410.10">
    <property type="entry name" value="putative deoxyguanosinetriphosphate triphosphohydrolase like domain"/>
    <property type="match status" value="1"/>
</dbReference>
<dbReference type="HAMAP" id="MF_00030">
    <property type="entry name" value="dGTPase_type1"/>
    <property type="match status" value="1"/>
</dbReference>
<dbReference type="InterPro" id="IPR023293">
    <property type="entry name" value="dGTP_triP_hydro_central_sf"/>
</dbReference>
<dbReference type="InterPro" id="IPR006261">
    <property type="entry name" value="dGTPase"/>
</dbReference>
<dbReference type="InterPro" id="IPR050135">
    <property type="entry name" value="dGTPase-like"/>
</dbReference>
<dbReference type="InterPro" id="IPR020779">
    <property type="entry name" value="dNTPase_1"/>
</dbReference>
<dbReference type="InterPro" id="IPR003607">
    <property type="entry name" value="HD/PDEase_dom"/>
</dbReference>
<dbReference type="InterPro" id="IPR006674">
    <property type="entry name" value="HD_domain"/>
</dbReference>
<dbReference type="NCBIfam" id="TIGR01353">
    <property type="entry name" value="dGTP_triPase"/>
    <property type="match status" value="1"/>
</dbReference>
<dbReference type="NCBIfam" id="NF003429">
    <property type="entry name" value="PRK04926.1"/>
    <property type="match status" value="1"/>
</dbReference>
<dbReference type="PANTHER" id="PTHR11373:SF32">
    <property type="entry name" value="DEOXYGUANOSINETRIPHOSPHATE TRIPHOSPHOHYDROLASE"/>
    <property type="match status" value="1"/>
</dbReference>
<dbReference type="PANTHER" id="PTHR11373">
    <property type="entry name" value="DEOXYNUCLEOSIDE TRIPHOSPHATE TRIPHOSPHOHYDROLASE"/>
    <property type="match status" value="1"/>
</dbReference>
<dbReference type="Pfam" id="PF01966">
    <property type="entry name" value="HD"/>
    <property type="match status" value="1"/>
</dbReference>
<dbReference type="SMART" id="SM00471">
    <property type="entry name" value="HDc"/>
    <property type="match status" value="1"/>
</dbReference>
<dbReference type="SUPFAM" id="SSF109604">
    <property type="entry name" value="HD-domain/PDEase-like"/>
    <property type="match status" value="1"/>
</dbReference>
<dbReference type="PROSITE" id="PS51831">
    <property type="entry name" value="HD"/>
    <property type="match status" value="1"/>
</dbReference>